<name>OSS2_PEA</name>
<organism>
    <name type="scientific">Pisum sativum</name>
    <name type="common">Garden pea</name>
    <name type="synonym">Lathyrus oleraceus</name>
    <dbReference type="NCBI Taxonomy" id="3888"/>
    <lineage>
        <taxon>Eukaryota</taxon>
        <taxon>Viridiplantae</taxon>
        <taxon>Streptophyta</taxon>
        <taxon>Embryophyta</taxon>
        <taxon>Tracheophyta</taxon>
        <taxon>Spermatophyta</taxon>
        <taxon>Magnoliopsida</taxon>
        <taxon>eudicotyledons</taxon>
        <taxon>Gunneridae</taxon>
        <taxon>Pentapetalae</taxon>
        <taxon>rosids</taxon>
        <taxon>fabids</taxon>
        <taxon>Fabales</taxon>
        <taxon>Fabaceae</taxon>
        <taxon>Papilionoideae</taxon>
        <taxon>50 kb inversion clade</taxon>
        <taxon>NPAAA clade</taxon>
        <taxon>Hologalegina</taxon>
        <taxon>IRL clade</taxon>
        <taxon>Fabeae</taxon>
        <taxon>Pisum</taxon>
    </lineage>
</organism>
<sequence length="181" mass="19974">MSLRSAFALLPLFLLLIVANVESRKDVGEYWKLVMKDQDMPEEIQGLLDASNIKNSKTHAKENMGAIGEFEPRPYASAYGDNEIHAKENMGAIGEFEPRPNASAYGDNEIHANENKGASGEFEPRPNISAYGDNEIHANENKGAIGEFETRPNASAYGDNEIGAEFTDDFEPRPSMTKYNA</sequence>
<keyword id="KW-0677">Repeat</keyword>
<protein>
    <recommendedName>
        <fullName>Organ-specific protein S2</fullName>
    </recommendedName>
</protein>
<proteinExistence type="evidence at transcript level"/>
<reference key="1">
    <citation type="journal article" date="1990" name="Plant Mol. Biol.">
        <title>Differential expression of two related organ-specific genes in pea.</title>
        <authorList>
            <person name="Williams M.E."/>
            <person name="Mundy J."/>
            <person name="Kay S.A."/>
            <person name="Chua N.H."/>
        </authorList>
    </citation>
    <scope>NUCLEOTIDE SEQUENCE [GENOMIC DNA]</scope>
    <source>
        <strain>cv. Feltham First</strain>
        <tissue>Stem</tissue>
    </source>
</reference>
<feature type="chain" id="PRO_0000058090" description="Organ-specific protein S2">
    <location>
        <begin position="1"/>
        <end position="181"/>
    </location>
</feature>
<feature type="repeat" description="1">
    <location>
        <begin position="59"/>
        <end position="84"/>
    </location>
</feature>
<feature type="repeat" description="2">
    <location>
        <begin position="85"/>
        <end position="110"/>
    </location>
</feature>
<feature type="repeat" description="3">
    <location>
        <begin position="111"/>
        <end position="136"/>
    </location>
</feature>
<feature type="repeat" description="4">
    <location>
        <begin position="137"/>
        <end position="162"/>
    </location>
</feature>
<feature type="region of interest" description="4 X 26 AA tandem repeats">
    <location>
        <begin position="59"/>
        <end position="162"/>
    </location>
</feature>
<feature type="region of interest" description="Disordered" evidence="1">
    <location>
        <begin position="94"/>
        <end position="181"/>
    </location>
</feature>
<dbReference type="EMBL" id="X51595">
    <property type="protein sequence ID" value="CAA35944.1"/>
    <property type="molecule type" value="Genomic_DNA"/>
</dbReference>
<dbReference type="PIR" id="S11875">
    <property type="entry name" value="KNPMS2"/>
</dbReference>
<dbReference type="SMR" id="P17772"/>
<dbReference type="InterPro" id="IPR024489">
    <property type="entry name" value="Organ_specific_prot"/>
</dbReference>
<dbReference type="PANTHER" id="PTHR33731:SF9">
    <property type="entry name" value="ORGAN SPECIFIC PROTEIN-RELATED"/>
    <property type="match status" value="1"/>
</dbReference>
<dbReference type="PANTHER" id="PTHR33731">
    <property type="entry name" value="PROTEIN, PUTATIVE-RELATED"/>
    <property type="match status" value="1"/>
</dbReference>
<dbReference type="Pfam" id="PF10950">
    <property type="entry name" value="Organ_specific"/>
    <property type="match status" value="2"/>
</dbReference>
<accession>P17772</accession>
<comment type="tissue specificity">
    <text>Expressed in stems.</text>
</comment>
<comment type="similarity">
    <text evidence="2">To organ specific protein P4.</text>
</comment>
<evidence type="ECO:0000256" key="1">
    <source>
        <dbReference type="SAM" id="MobiDB-lite"/>
    </source>
</evidence>
<evidence type="ECO:0000305" key="2"/>